<dbReference type="EMBL" id="CP000728">
    <property type="protein sequence ID" value="ABS41901.1"/>
    <property type="molecule type" value="Genomic_DNA"/>
</dbReference>
<dbReference type="RefSeq" id="WP_003494932.1">
    <property type="nucleotide sequence ID" value="NC_009699.1"/>
</dbReference>
<dbReference type="SMR" id="A7GJ63"/>
<dbReference type="GeneID" id="92940239"/>
<dbReference type="KEGG" id="cbf:CLI_3652"/>
<dbReference type="HOGENOM" id="CLU_093315_2_3_9"/>
<dbReference type="Proteomes" id="UP000002410">
    <property type="component" value="Chromosome"/>
</dbReference>
<dbReference type="GO" id="GO:1990904">
    <property type="term" value="C:ribonucleoprotein complex"/>
    <property type="evidence" value="ECO:0007669"/>
    <property type="project" value="UniProtKB-KW"/>
</dbReference>
<dbReference type="GO" id="GO:0005840">
    <property type="term" value="C:ribosome"/>
    <property type="evidence" value="ECO:0007669"/>
    <property type="project" value="UniProtKB-KW"/>
</dbReference>
<dbReference type="GO" id="GO:0019843">
    <property type="term" value="F:rRNA binding"/>
    <property type="evidence" value="ECO:0007669"/>
    <property type="project" value="UniProtKB-UniRule"/>
</dbReference>
<dbReference type="GO" id="GO:0003735">
    <property type="term" value="F:structural constituent of ribosome"/>
    <property type="evidence" value="ECO:0007669"/>
    <property type="project" value="InterPro"/>
</dbReference>
<dbReference type="GO" id="GO:0006412">
    <property type="term" value="P:translation"/>
    <property type="evidence" value="ECO:0007669"/>
    <property type="project" value="UniProtKB-UniRule"/>
</dbReference>
<dbReference type="CDD" id="cd06089">
    <property type="entry name" value="KOW_RPL26"/>
    <property type="match status" value="1"/>
</dbReference>
<dbReference type="FunFam" id="2.30.30.30:FF:000004">
    <property type="entry name" value="50S ribosomal protein L24"/>
    <property type="match status" value="1"/>
</dbReference>
<dbReference type="Gene3D" id="2.30.30.30">
    <property type="match status" value="1"/>
</dbReference>
<dbReference type="HAMAP" id="MF_01326_B">
    <property type="entry name" value="Ribosomal_uL24_B"/>
    <property type="match status" value="1"/>
</dbReference>
<dbReference type="InterPro" id="IPR005824">
    <property type="entry name" value="KOW"/>
</dbReference>
<dbReference type="InterPro" id="IPR014722">
    <property type="entry name" value="Rib_uL2_dom2"/>
</dbReference>
<dbReference type="InterPro" id="IPR003256">
    <property type="entry name" value="Ribosomal_uL24"/>
</dbReference>
<dbReference type="InterPro" id="IPR041988">
    <property type="entry name" value="Ribosomal_uL24_KOW"/>
</dbReference>
<dbReference type="InterPro" id="IPR008991">
    <property type="entry name" value="Translation_prot_SH3-like_sf"/>
</dbReference>
<dbReference type="NCBIfam" id="TIGR01079">
    <property type="entry name" value="rplX_bact"/>
    <property type="match status" value="1"/>
</dbReference>
<dbReference type="PANTHER" id="PTHR12903">
    <property type="entry name" value="MITOCHONDRIAL RIBOSOMAL PROTEIN L24"/>
    <property type="match status" value="1"/>
</dbReference>
<dbReference type="Pfam" id="PF00467">
    <property type="entry name" value="KOW"/>
    <property type="match status" value="1"/>
</dbReference>
<dbReference type="Pfam" id="PF17136">
    <property type="entry name" value="ribosomal_L24"/>
    <property type="match status" value="1"/>
</dbReference>
<dbReference type="SMART" id="SM00739">
    <property type="entry name" value="KOW"/>
    <property type="match status" value="1"/>
</dbReference>
<dbReference type="SUPFAM" id="SSF50104">
    <property type="entry name" value="Translation proteins SH3-like domain"/>
    <property type="match status" value="1"/>
</dbReference>
<gene>
    <name evidence="1" type="primary">rplX</name>
    <name type="ordered locus">CLI_3652</name>
</gene>
<reference key="1">
    <citation type="submission" date="2007-06" db="EMBL/GenBank/DDBJ databases">
        <authorList>
            <person name="Brinkac L.M."/>
            <person name="Daugherty S."/>
            <person name="Dodson R.J."/>
            <person name="Madupu R."/>
            <person name="Brown J.L."/>
            <person name="Bruce D."/>
            <person name="Detter C."/>
            <person name="Munk C."/>
            <person name="Smith L.A."/>
            <person name="Smith T.J."/>
            <person name="White O."/>
            <person name="Brettin T.S."/>
        </authorList>
    </citation>
    <scope>NUCLEOTIDE SEQUENCE [LARGE SCALE GENOMIC DNA]</scope>
    <source>
        <strain>Langeland / NCTC 10281 / Type F</strain>
    </source>
</reference>
<feature type="chain" id="PRO_0000355661" description="Large ribosomal subunit protein uL24">
    <location>
        <begin position="1"/>
        <end position="105"/>
    </location>
</feature>
<organism>
    <name type="scientific">Clostridium botulinum (strain Langeland / NCTC 10281 / Type F)</name>
    <dbReference type="NCBI Taxonomy" id="441772"/>
    <lineage>
        <taxon>Bacteria</taxon>
        <taxon>Bacillati</taxon>
        <taxon>Bacillota</taxon>
        <taxon>Clostridia</taxon>
        <taxon>Eubacteriales</taxon>
        <taxon>Clostridiaceae</taxon>
        <taxon>Clostridium</taxon>
    </lineage>
</organism>
<keyword id="KW-0687">Ribonucleoprotein</keyword>
<keyword id="KW-0689">Ribosomal protein</keyword>
<keyword id="KW-0694">RNA-binding</keyword>
<keyword id="KW-0699">rRNA-binding</keyword>
<accession>A7GJ63</accession>
<comment type="function">
    <text evidence="1">One of two assembly initiator proteins, it binds directly to the 5'-end of the 23S rRNA, where it nucleates assembly of the 50S subunit.</text>
</comment>
<comment type="function">
    <text evidence="1">One of the proteins that surrounds the polypeptide exit tunnel on the outside of the subunit.</text>
</comment>
<comment type="subunit">
    <text evidence="1">Part of the 50S ribosomal subunit.</text>
</comment>
<comment type="similarity">
    <text evidence="1">Belongs to the universal ribosomal protein uL24 family.</text>
</comment>
<sequence>MSKIHVRKKDTVVVISGKDKGKIGEVLSVLPKKGKVIVKDVNVVTKHQKPNRENMQGGIIHKEAPIFSSKVMLYCDKCKSATRISNKILEDGTKVRVCKKCGETF</sequence>
<proteinExistence type="inferred from homology"/>
<name>RL24_CLOBL</name>
<protein>
    <recommendedName>
        <fullName evidence="1">Large ribosomal subunit protein uL24</fullName>
    </recommendedName>
    <alternativeName>
        <fullName evidence="2">50S ribosomal protein L24</fullName>
    </alternativeName>
</protein>
<evidence type="ECO:0000255" key="1">
    <source>
        <dbReference type="HAMAP-Rule" id="MF_01326"/>
    </source>
</evidence>
<evidence type="ECO:0000305" key="2"/>